<protein>
    <recommendedName>
        <fullName evidence="1">Photosystem II reaction center X protein</fullName>
    </recommendedName>
</protein>
<evidence type="ECO:0000255" key="1">
    <source>
        <dbReference type="HAMAP-Rule" id="MF_01388"/>
    </source>
</evidence>
<organism>
    <name type="scientific">Prochlorococcus marinus (strain SARG / CCMP1375 / SS120)</name>
    <dbReference type="NCBI Taxonomy" id="167539"/>
    <lineage>
        <taxon>Bacteria</taxon>
        <taxon>Bacillati</taxon>
        <taxon>Cyanobacteriota</taxon>
        <taxon>Cyanophyceae</taxon>
        <taxon>Synechococcales</taxon>
        <taxon>Prochlorococcaceae</taxon>
        <taxon>Prochlorococcus</taxon>
    </lineage>
</organism>
<dbReference type="EMBL" id="AE017126">
    <property type="protein sequence ID" value="AAP99122.1"/>
    <property type="molecule type" value="Genomic_DNA"/>
</dbReference>
<dbReference type="RefSeq" id="NP_874470.1">
    <property type="nucleotide sequence ID" value="NC_005042.1"/>
</dbReference>
<dbReference type="RefSeq" id="WP_011124231.1">
    <property type="nucleotide sequence ID" value="NC_005042.1"/>
</dbReference>
<dbReference type="SMR" id="Q7VED7"/>
<dbReference type="STRING" id="167539.Pro_0076"/>
<dbReference type="EnsemblBacteria" id="AAP99122">
    <property type="protein sequence ID" value="AAP99122"/>
    <property type="gene ID" value="Pro_0076"/>
</dbReference>
<dbReference type="KEGG" id="pma:Pro_0076"/>
<dbReference type="PATRIC" id="fig|167539.5.peg.80"/>
<dbReference type="HOGENOM" id="CLU_209178_0_0_3"/>
<dbReference type="Proteomes" id="UP000001420">
    <property type="component" value="Chromosome"/>
</dbReference>
<dbReference type="GO" id="GO:0009523">
    <property type="term" value="C:photosystem II"/>
    <property type="evidence" value="ECO:0007669"/>
    <property type="project" value="UniProtKB-KW"/>
</dbReference>
<dbReference type="GO" id="GO:0031676">
    <property type="term" value="C:plasma membrane-derived thylakoid membrane"/>
    <property type="evidence" value="ECO:0007669"/>
    <property type="project" value="UniProtKB-SubCell"/>
</dbReference>
<dbReference type="GO" id="GO:0015979">
    <property type="term" value="P:photosynthesis"/>
    <property type="evidence" value="ECO:0007669"/>
    <property type="project" value="UniProtKB-KW"/>
</dbReference>
<dbReference type="HAMAP" id="MF_01388">
    <property type="entry name" value="PSII_PsbX_2"/>
    <property type="match status" value="1"/>
</dbReference>
<dbReference type="InterPro" id="IPR009518">
    <property type="entry name" value="PSII_PsbX"/>
</dbReference>
<dbReference type="InterPro" id="IPR023428">
    <property type="entry name" value="PSII_PsbX_type_2_subfam"/>
</dbReference>
<dbReference type="Pfam" id="PF06596">
    <property type="entry name" value="PsbX"/>
    <property type="match status" value="1"/>
</dbReference>
<sequence>MAFTLLFGAGVSGDVATASAVGMIGSFLAAAALIVVPAASFLLWVSQKDALERGR</sequence>
<accession>Q7VED7</accession>
<gene>
    <name evidence="1" type="primary">psbX</name>
    <name type="ordered locus">Pro_0076</name>
</gene>
<feature type="chain" id="PRO_0000345367" description="Photosystem II reaction center X protein">
    <location>
        <begin position="1"/>
        <end position="55"/>
    </location>
</feature>
<feature type="transmembrane region" description="Helical" evidence="1">
    <location>
        <begin position="24"/>
        <end position="44"/>
    </location>
</feature>
<comment type="function">
    <text evidence="1">Involved in the binding and/or turnover of quinones at the Q(B) site of Photosystem II.</text>
</comment>
<comment type="subunit">
    <text evidence="1">PSII consists of a core antenna complex that captures photons, and an electron transfer chain that converts photonic excitation into a charge separation. PSII forms dimeric complexes.</text>
</comment>
<comment type="subcellular location">
    <subcellularLocation>
        <location evidence="1">Cellular thylakoid membrane</location>
        <topology evidence="1">Single-pass membrane protein</topology>
    </subcellularLocation>
</comment>
<comment type="similarity">
    <text evidence="1">Belongs to the PsbX family. Type 2 subfamily.</text>
</comment>
<name>PSBX_PROMA</name>
<keyword id="KW-0472">Membrane</keyword>
<keyword id="KW-0602">Photosynthesis</keyword>
<keyword id="KW-0604">Photosystem II</keyword>
<keyword id="KW-1185">Reference proteome</keyword>
<keyword id="KW-0793">Thylakoid</keyword>
<keyword id="KW-0812">Transmembrane</keyword>
<keyword id="KW-1133">Transmembrane helix</keyword>
<reference key="1">
    <citation type="journal article" date="2003" name="Proc. Natl. Acad. Sci. U.S.A.">
        <title>Genome sequence of the cyanobacterium Prochlorococcus marinus SS120, a nearly minimal oxyphototrophic genome.</title>
        <authorList>
            <person name="Dufresne A."/>
            <person name="Salanoubat M."/>
            <person name="Partensky F."/>
            <person name="Artiguenave F."/>
            <person name="Axmann I.M."/>
            <person name="Barbe V."/>
            <person name="Duprat S."/>
            <person name="Galperin M.Y."/>
            <person name="Koonin E.V."/>
            <person name="Le Gall F."/>
            <person name="Makarova K.S."/>
            <person name="Ostrowski M."/>
            <person name="Oztas S."/>
            <person name="Robert C."/>
            <person name="Rogozin I.B."/>
            <person name="Scanlan D.J."/>
            <person name="Tandeau de Marsac N."/>
            <person name="Weissenbach J."/>
            <person name="Wincker P."/>
            <person name="Wolf Y.I."/>
            <person name="Hess W.R."/>
        </authorList>
    </citation>
    <scope>NUCLEOTIDE SEQUENCE [LARGE SCALE GENOMIC DNA]</scope>
    <source>
        <strain>SARG / CCMP1375 / SS120</strain>
    </source>
</reference>
<proteinExistence type="inferred from homology"/>